<proteinExistence type="evidence at protein level"/>
<keyword id="KW-0025">Alternative splicing</keyword>
<keyword id="KW-0131">Cell cycle</keyword>
<keyword id="KW-0132">Cell division</keyword>
<keyword id="KW-0963">Cytoplasm</keyword>
<keyword id="KW-0217">Developmental protein</keyword>
<keyword id="KW-0226">DNA condensation</keyword>
<keyword id="KW-1017">Isopeptide bond</keyword>
<keyword id="KW-0498">Mitosis</keyword>
<keyword id="KW-0539">Nucleus</keyword>
<keyword id="KW-1185">Reference proteome</keyword>
<keyword id="KW-0832">Ubl conjugation</keyword>
<keyword id="KW-0833">Ubl conjugation pathway</keyword>
<dbReference type="EMBL" id="U58084">
    <property type="protein sequence ID" value="AAC47121.1"/>
    <property type="molecule type" value="mRNA"/>
</dbReference>
<dbReference type="EMBL" id="BX284603">
    <property type="protein sequence ID" value="CAB07302.3"/>
    <property type="molecule type" value="Genomic_DNA"/>
</dbReference>
<dbReference type="EMBL" id="BX284603">
    <property type="protein sequence ID" value="CAD18893.2"/>
    <property type="molecule type" value="Genomic_DNA"/>
</dbReference>
<dbReference type="EMBL" id="BX284603">
    <property type="protein sequence ID" value="CAD45612.3"/>
    <property type="molecule type" value="Genomic_DNA"/>
</dbReference>
<dbReference type="PIR" id="C88618">
    <property type="entry name" value="C88618"/>
</dbReference>
<dbReference type="PIR" id="T27884">
    <property type="entry name" value="T27884"/>
</dbReference>
<dbReference type="RefSeq" id="NP_001023007.1">
    <molecule id="Q17390-2"/>
    <property type="nucleotide sequence ID" value="NM_001027836.6"/>
</dbReference>
<dbReference type="RefSeq" id="NP_001023008.1">
    <molecule id="Q17390-1"/>
    <property type="nucleotide sequence ID" value="NM_001027837.3"/>
</dbReference>
<dbReference type="RefSeq" id="NP_001023009.1">
    <property type="nucleotide sequence ID" value="NM_001027838.2"/>
</dbReference>
<dbReference type="RefSeq" id="NP_001367020.1">
    <molecule id="Q17390-3"/>
    <property type="nucleotide sequence ID" value="NM_001379988.2"/>
</dbReference>
<dbReference type="SMR" id="Q17390"/>
<dbReference type="BioGRID" id="41972">
    <property type="interactions" value="15"/>
</dbReference>
<dbReference type="ComplexPortal" id="CPX-3383">
    <property type="entry name" value="CBC-fem-1 Ubiquitin Ligase complex"/>
</dbReference>
<dbReference type="FunCoup" id="Q17390">
    <property type="interactions" value="3338"/>
</dbReference>
<dbReference type="IntAct" id="Q17390">
    <property type="interactions" value="9"/>
</dbReference>
<dbReference type="MINT" id="Q17390"/>
<dbReference type="STRING" id="6239.ZK520.4c.1"/>
<dbReference type="PaxDb" id="6239-ZK520.4a"/>
<dbReference type="PeptideAtlas" id="Q17390"/>
<dbReference type="EnsemblMetazoa" id="ZK520.4b.1">
    <molecule id="Q17390-2"/>
    <property type="protein sequence ID" value="ZK520.4b.1"/>
    <property type="gene ID" value="WBGene00000837"/>
</dbReference>
<dbReference type="EnsemblMetazoa" id="ZK520.4b.2">
    <molecule id="Q17390-2"/>
    <property type="protein sequence ID" value="ZK520.4b.2"/>
    <property type="gene ID" value="WBGene00000837"/>
</dbReference>
<dbReference type="EnsemblMetazoa" id="ZK520.4c.1">
    <molecule id="Q17390-1"/>
    <property type="protein sequence ID" value="ZK520.4c.1"/>
    <property type="gene ID" value="WBGene00000837"/>
</dbReference>
<dbReference type="EnsemblMetazoa" id="ZK520.4d.1">
    <molecule id="Q17390-3"/>
    <property type="protein sequence ID" value="ZK520.4d.1"/>
    <property type="gene ID" value="WBGene00000837"/>
</dbReference>
<dbReference type="GeneID" id="176806"/>
<dbReference type="KEGG" id="cel:CELE_ZK520.4"/>
<dbReference type="UCSC" id="ZK520.4a">
    <property type="organism name" value="c. elegans"/>
</dbReference>
<dbReference type="AGR" id="WB:WBGene00000837"/>
<dbReference type="CTD" id="176806"/>
<dbReference type="WormBase" id="ZK520.4b">
    <molecule id="Q17390-2"/>
    <property type="protein sequence ID" value="CE32775"/>
    <property type="gene ID" value="WBGene00000837"/>
    <property type="gene designation" value="cul-2"/>
</dbReference>
<dbReference type="WormBase" id="ZK520.4c">
    <molecule id="Q17390-1"/>
    <property type="protein sequence ID" value="CE32776"/>
    <property type="gene ID" value="WBGene00000837"/>
    <property type="gene designation" value="cul-2"/>
</dbReference>
<dbReference type="WormBase" id="ZK520.4d">
    <molecule id="Q17390-3"/>
    <property type="protein sequence ID" value="CE36259"/>
    <property type="gene ID" value="WBGene00000837"/>
    <property type="gene designation" value="cul-2"/>
</dbReference>
<dbReference type="eggNOG" id="KOG2284">
    <property type="taxonomic scope" value="Eukaryota"/>
</dbReference>
<dbReference type="GeneTree" id="ENSGT00940000154926"/>
<dbReference type="InParanoid" id="Q17390"/>
<dbReference type="OrthoDB" id="27073at2759"/>
<dbReference type="PhylomeDB" id="Q17390"/>
<dbReference type="Reactome" id="R-CEL-1234176">
    <property type="pathway name" value="Oxygen-dependent proline hydroxylation of Hypoxia-inducible Factor Alpha"/>
</dbReference>
<dbReference type="Reactome" id="R-CEL-8951664">
    <property type="pathway name" value="Neddylation"/>
</dbReference>
<dbReference type="Reactome" id="R-CEL-983168">
    <property type="pathway name" value="Antigen processing: Ubiquitination &amp; Proteasome degradation"/>
</dbReference>
<dbReference type="SignaLink" id="Q17390"/>
<dbReference type="UniPathway" id="UPA00143"/>
<dbReference type="PRO" id="PR:Q17390"/>
<dbReference type="Proteomes" id="UP000001940">
    <property type="component" value="Chromosome III"/>
</dbReference>
<dbReference type="Bgee" id="WBGene00000837">
    <property type="expression patterns" value="Expressed in embryo and 6 other cell types or tissues"/>
</dbReference>
<dbReference type="GO" id="GO:0031462">
    <property type="term" value="C:Cul2-RING ubiquitin ligase complex"/>
    <property type="evidence" value="ECO:0000314"/>
    <property type="project" value="UniProtKB"/>
</dbReference>
<dbReference type="GO" id="GO:0005737">
    <property type="term" value="C:cytoplasm"/>
    <property type="evidence" value="ECO:0000314"/>
    <property type="project" value="WormBase"/>
</dbReference>
<dbReference type="GO" id="GO:0005634">
    <property type="term" value="C:nucleus"/>
    <property type="evidence" value="ECO:0000314"/>
    <property type="project" value="WormBase"/>
</dbReference>
<dbReference type="GO" id="GO:0019005">
    <property type="term" value="C:SCF ubiquitin ligase complex"/>
    <property type="evidence" value="ECO:0000318"/>
    <property type="project" value="GO_Central"/>
</dbReference>
<dbReference type="GO" id="GO:0030674">
    <property type="term" value="F:protein-macromolecule adaptor activity"/>
    <property type="evidence" value="ECO:0000318"/>
    <property type="project" value="GO_Central"/>
</dbReference>
<dbReference type="GO" id="GO:0031625">
    <property type="term" value="F:ubiquitin protein ligase binding"/>
    <property type="evidence" value="ECO:0000318"/>
    <property type="project" value="GO_Central"/>
</dbReference>
<dbReference type="GO" id="GO:0031145">
    <property type="term" value="P:anaphase-promoting complex-dependent catabolic process"/>
    <property type="evidence" value="ECO:0000315"/>
    <property type="project" value="WormBase"/>
</dbReference>
<dbReference type="GO" id="GO:0008595">
    <property type="term" value="P:anterior/posterior axis specification, embryo"/>
    <property type="evidence" value="ECO:0000315"/>
    <property type="project" value="WormBase"/>
</dbReference>
<dbReference type="GO" id="GO:0030261">
    <property type="term" value="P:chromosome condensation"/>
    <property type="evidence" value="ECO:0007669"/>
    <property type="project" value="UniProtKB-KW"/>
</dbReference>
<dbReference type="GO" id="GO:0042078">
    <property type="term" value="P:germ-line stem cell division"/>
    <property type="evidence" value="ECO:0000315"/>
    <property type="project" value="WormBase"/>
</dbReference>
<dbReference type="GO" id="GO:0019100">
    <property type="term" value="P:male germ-line sex determination"/>
    <property type="evidence" value="ECO:0000315"/>
    <property type="project" value="WormBase"/>
</dbReference>
<dbReference type="GO" id="GO:0030238">
    <property type="term" value="P:male sex determination"/>
    <property type="evidence" value="ECO:0000315"/>
    <property type="project" value="ComplexPortal"/>
</dbReference>
<dbReference type="GO" id="GO:0019102">
    <property type="term" value="P:male somatic sex determination"/>
    <property type="evidence" value="ECO:0000315"/>
    <property type="project" value="WormBase"/>
</dbReference>
<dbReference type="GO" id="GO:0051232">
    <property type="term" value="P:meiotic spindle elongation"/>
    <property type="evidence" value="ECO:0000315"/>
    <property type="project" value="WormBase"/>
</dbReference>
<dbReference type="GO" id="GO:1902104">
    <property type="term" value="P:positive regulation of metaphase/anaphase transition of meiotic cell cycle"/>
    <property type="evidence" value="ECO:0000315"/>
    <property type="project" value="WormBase"/>
</dbReference>
<dbReference type="GO" id="GO:0043161">
    <property type="term" value="P:proteasome-mediated ubiquitin-dependent protein catabolic process"/>
    <property type="evidence" value="ECO:0000315"/>
    <property type="project" value="WormBase"/>
</dbReference>
<dbReference type="GO" id="GO:0008104">
    <property type="term" value="P:protein localization"/>
    <property type="evidence" value="ECO:0000315"/>
    <property type="project" value="WormBase"/>
</dbReference>
<dbReference type="GO" id="GO:0016567">
    <property type="term" value="P:protein ubiquitination"/>
    <property type="evidence" value="ECO:0000318"/>
    <property type="project" value="GO_Central"/>
</dbReference>
<dbReference type="GO" id="GO:0031146">
    <property type="term" value="P:SCF-dependent proteasomal ubiquitin-dependent protein catabolic process"/>
    <property type="evidence" value="ECO:0000318"/>
    <property type="project" value="GO_Central"/>
</dbReference>
<dbReference type="GO" id="GO:0051759">
    <property type="term" value="P:sister chromosome movement towards spindle pole involved in meiotic sister chromatid segregation"/>
    <property type="evidence" value="ECO:0000315"/>
    <property type="project" value="WormBase"/>
</dbReference>
<dbReference type="FunFam" id="1.10.10.10:FF:000014">
    <property type="entry name" value="Cullin 1"/>
    <property type="match status" value="1"/>
</dbReference>
<dbReference type="FunFam" id="1.20.1310.10:FF:000012">
    <property type="entry name" value="Cullin 2"/>
    <property type="match status" value="1"/>
</dbReference>
<dbReference type="FunFam" id="1.20.1310.10:FF:000022">
    <property type="entry name" value="Cullin-2 isoform 2"/>
    <property type="match status" value="1"/>
</dbReference>
<dbReference type="FunFam" id="1.20.1310.10:FF:000083">
    <property type="entry name" value="Protein CBR-CUL-2"/>
    <property type="match status" value="1"/>
</dbReference>
<dbReference type="FunFam" id="1.20.1310.10:FF:000084">
    <property type="entry name" value="Protein CBR-CUL-2"/>
    <property type="match status" value="1"/>
</dbReference>
<dbReference type="FunFam" id="3.30.230.130:FF:000023">
    <property type="entry name" value="Protein CBR-CUL-2"/>
    <property type="match status" value="1"/>
</dbReference>
<dbReference type="Gene3D" id="1.20.1310.10">
    <property type="entry name" value="Cullin Repeats"/>
    <property type="match status" value="4"/>
</dbReference>
<dbReference type="Gene3D" id="3.30.230.130">
    <property type="entry name" value="Cullin, Chain C, Domain 2"/>
    <property type="match status" value="1"/>
</dbReference>
<dbReference type="Gene3D" id="1.10.10.10">
    <property type="entry name" value="Winged helix-like DNA-binding domain superfamily/Winged helix DNA-binding domain"/>
    <property type="match status" value="1"/>
</dbReference>
<dbReference type="InterPro" id="IPR045093">
    <property type="entry name" value="Cullin"/>
</dbReference>
<dbReference type="InterPro" id="IPR016157">
    <property type="entry name" value="Cullin_CS"/>
</dbReference>
<dbReference type="InterPro" id="IPR016158">
    <property type="entry name" value="Cullin_homology"/>
</dbReference>
<dbReference type="InterPro" id="IPR036317">
    <property type="entry name" value="Cullin_homology_sf"/>
</dbReference>
<dbReference type="InterPro" id="IPR001373">
    <property type="entry name" value="Cullin_N"/>
</dbReference>
<dbReference type="InterPro" id="IPR019559">
    <property type="entry name" value="Cullin_neddylation_domain"/>
</dbReference>
<dbReference type="InterPro" id="IPR016159">
    <property type="entry name" value="Cullin_repeat-like_dom_sf"/>
</dbReference>
<dbReference type="InterPro" id="IPR036388">
    <property type="entry name" value="WH-like_DNA-bd_sf"/>
</dbReference>
<dbReference type="InterPro" id="IPR036390">
    <property type="entry name" value="WH_DNA-bd_sf"/>
</dbReference>
<dbReference type="PANTHER" id="PTHR11932">
    <property type="entry name" value="CULLIN"/>
    <property type="match status" value="1"/>
</dbReference>
<dbReference type="Pfam" id="PF00888">
    <property type="entry name" value="Cullin"/>
    <property type="match status" value="1"/>
</dbReference>
<dbReference type="Pfam" id="PF10557">
    <property type="entry name" value="Cullin_Nedd8"/>
    <property type="match status" value="1"/>
</dbReference>
<dbReference type="SMART" id="SM00182">
    <property type="entry name" value="CULLIN"/>
    <property type="match status" value="1"/>
</dbReference>
<dbReference type="SMART" id="SM00884">
    <property type="entry name" value="Cullin_Nedd8"/>
    <property type="match status" value="1"/>
</dbReference>
<dbReference type="SUPFAM" id="SSF75632">
    <property type="entry name" value="Cullin homology domain"/>
    <property type="match status" value="1"/>
</dbReference>
<dbReference type="SUPFAM" id="SSF74788">
    <property type="entry name" value="Cullin repeat-like"/>
    <property type="match status" value="1"/>
</dbReference>
<dbReference type="SUPFAM" id="SSF46785">
    <property type="entry name" value="Winged helix' DNA-binding domain"/>
    <property type="match status" value="1"/>
</dbReference>
<dbReference type="PROSITE" id="PS01256">
    <property type="entry name" value="CULLIN_1"/>
    <property type="match status" value="1"/>
</dbReference>
<dbReference type="PROSITE" id="PS50069">
    <property type="entry name" value="CULLIN_2"/>
    <property type="match status" value="1"/>
</dbReference>
<reference key="1">
    <citation type="journal article" date="1996" name="Cell">
        <title>cul-1 is required for cell cycle exit in C. elegans and identifies a novel gene family.</title>
        <authorList>
            <person name="Kipreos E.T."/>
            <person name="Lander L.E."/>
            <person name="Wing J.P."/>
            <person name="He W.W."/>
            <person name="Hedgecock E.M."/>
        </authorList>
    </citation>
    <scope>NUCLEOTIDE SEQUENCE [MRNA] (ISOFORM D)</scope>
    <source>
        <strain>Bristol N2</strain>
    </source>
</reference>
<reference key="2">
    <citation type="journal article" date="1998" name="Science">
        <title>Genome sequence of the nematode C. elegans: a platform for investigating biology.</title>
        <authorList>
            <consortium name="The C. elegans sequencing consortium"/>
        </authorList>
    </citation>
    <scope>NUCLEOTIDE SEQUENCE [LARGE SCALE GENOMIC DNA]</scope>
    <source>
        <strain>Bristol N2</strain>
    </source>
</reference>
<reference key="3">
    <citation type="journal article" date="1999" name="Nat. Cell Biol.">
        <title>CUL-2 is required for the G1-to-S-phase transition and mitotic chromosome condensation in Caenorhabditis elegans.</title>
        <authorList>
            <person name="Feng H."/>
            <person name="Zhong W."/>
            <person name="Punkosdy G."/>
            <person name="Gu S."/>
            <person name="Zhou L."/>
            <person name="Seabolt E.K."/>
            <person name="Kipreos E.T."/>
        </authorList>
    </citation>
    <scope>FUNCTION</scope>
    <scope>SUBCELLULAR LOCATION</scope>
    <scope>TISSUE SPECIFICITY</scope>
    <scope>DEVELOPMENTAL STAGE</scope>
</reference>
<reference key="4">
    <citation type="journal article" date="2002" name="Curr. Biol.">
        <title>Multiple Skp1-related proteins in Caenorhabditis elegans: diverse patterns of interaction with Cullins and F-box proteins.</title>
        <authorList>
            <person name="Yamanaka A."/>
            <person name="Yada M."/>
            <person name="Imaki H."/>
            <person name="Koga M."/>
            <person name="Ohshima Y."/>
            <person name="Nakayama K."/>
        </authorList>
    </citation>
    <scope>INTERACTION WITH SKR-10</scope>
</reference>
<reference key="5">
    <citation type="journal article" date="2003" name="Nature">
        <title>Exclusion of germ plasm proteins from somatic lineages by cullin-dependent degradation.</title>
        <authorList>
            <person name="DeRenzo C."/>
            <person name="Reese K.J."/>
            <person name="Seydoux G."/>
        </authorList>
    </citation>
    <scope>FUNCTION</scope>
    <scope>IDENTIFICATION IN THE CBC(ZYF-1) COMPLEX</scope>
</reference>
<reference key="6">
    <citation type="journal article" date="2007" name="Dev. Cell">
        <title>A CUL-2 ubiquitin ligase containing three FEM proteins degrades TRA-1 to regulate C. elegans sex determination.</title>
        <authorList>
            <person name="Starostina N.G."/>
            <person name="Lim J.M."/>
            <person name="Schvarzstein M."/>
            <person name="Wells L."/>
            <person name="Spence A.M."/>
            <person name="Kipreos E.T."/>
        </authorList>
    </citation>
    <scope>FUNCTION</scope>
    <scope>IDENTIFICATION IN THE CBC(FEM-1) COMPLEX</scope>
    <scope>INTERACTION WITH TRA-1 AND FEM-1</scope>
</reference>
<reference key="7">
    <citation type="journal article" date="2007" name="EMBO Rep.">
        <title>The Caenorhabditis elegans cell-cycle regulator ZYG-11 defines a conserved family of CUL-2 complex components.</title>
        <authorList>
            <person name="Vasudevan S."/>
            <person name="Starostina N.G."/>
            <person name="Kipreos E.T."/>
        </authorList>
    </citation>
    <scope>FUNCTION</scope>
    <scope>IDENTIFICATION IN COMPLEX WITH ZYG-11 AND ELC-1</scope>
</reference>
<reference key="8">
    <citation type="journal article" date="2017" name="Nat. Cell Biol.">
        <title>CUL-2LRR-1 and UBXN-3 drive replisome disassembly during DNA replication termination and mitosis.</title>
        <authorList>
            <person name="Sonneville R."/>
            <person name="Moreno S.P."/>
            <person name="Knebel A."/>
            <person name="Johnson C."/>
            <person name="Hastie C.J."/>
            <person name="Gartner A."/>
            <person name="Gambus A."/>
            <person name="Labib K."/>
        </authorList>
    </citation>
    <scope>FUNCTION</scope>
    <scope>IDENTIFICATION IN THE CBC(LRR-1) COMPLEX</scope>
    <scope>INTERACTION WITH REPLISOME COMPLEX</scope>
    <scope>DISRUPTION PHENOTYPE</scope>
</reference>
<evidence type="ECO:0000250" key="1">
    <source>
        <dbReference type="UniProtKB" id="Q13616"/>
    </source>
</evidence>
<evidence type="ECO:0000250" key="2">
    <source>
        <dbReference type="UniProtKB" id="Q13617"/>
    </source>
</evidence>
<evidence type="ECO:0000250" key="3">
    <source>
        <dbReference type="UniProtKB" id="Q9D4H8"/>
    </source>
</evidence>
<evidence type="ECO:0000255" key="4"/>
<evidence type="ECO:0000255" key="5">
    <source>
        <dbReference type="PROSITE-ProRule" id="PRU00330"/>
    </source>
</evidence>
<evidence type="ECO:0000269" key="6">
    <source>
    </source>
</evidence>
<evidence type="ECO:0000269" key="7">
    <source>
    </source>
</evidence>
<evidence type="ECO:0000269" key="8">
    <source>
    </source>
</evidence>
<evidence type="ECO:0000269" key="9">
    <source>
    </source>
</evidence>
<evidence type="ECO:0000269" key="10">
    <source>
    </source>
</evidence>
<evidence type="ECO:0000269" key="11">
    <source>
    </source>
</evidence>
<evidence type="ECO:0000305" key="12"/>
<evidence type="ECO:0000305" key="13">
    <source>
    </source>
</evidence>
<evidence type="ECO:0000312" key="14">
    <source>
        <dbReference type="WormBase" id="ZK520.4b"/>
    </source>
</evidence>
<evidence type="ECO:0000312" key="15">
    <source>
        <dbReference type="WormBase" id="ZK520.4c"/>
    </source>
</evidence>
<evidence type="ECO:0000312" key="16">
    <source>
        <dbReference type="WormBase" id="ZK520.4d"/>
    </source>
</evidence>
<protein>
    <recommendedName>
        <fullName>Cullin-2</fullName>
        <shortName>CUL-2</shortName>
    </recommendedName>
</protein>
<gene>
    <name evidence="15" type="primary">cul-2</name>
    <name evidence="15" type="synonym">ccd-3</name>
    <name evidence="15" type="synonym">div-3</name>
    <name evidence="15" type="ORF">ZK520.4</name>
</gene>
<organism>
    <name type="scientific">Caenorhabditis elegans</name>
    <dbReference type="NCBI Taxonomy" id="6239"/>
    <lineage>
        <taxon>Eukaryota</taxon>
        <taxon>Metazoa</taxon>
        <taxon>Ecdysozoa</taxon>
        <taxon>Nematoda</taxon>
        <taxon>Chromadorea</taxon>
        <taxon>Rhabditida</taxon>
        <taxon>Rhabditina</taxon>
        <taxon>Rhabditomorpha</taxon>
        <taxon>Rhabditoidea</taxon>
        <taxon>Rhabditidae</taxon>
        <taxon>Peloderinae</taxon>
        <taxon>Caenorhabditis</taxon>
    </lineage>
</organism>
<sequence>MASSTKVSLRRPPRPQVMYSLKPKVVEFDKVWVQLRPSIIDIINLRPITNVQWHHKFSDVYDICVSIPTPLSERLYNEVKACIQEHVRQKRQDIVDVDPDLLLQEYHKMWRVFHEGAIFIHRLFGYLNKQFVKQKRCTDLDNFAQYAAFLQIPDVKEIGCLALEIWKEDLVKTILPQLVKLLLIAIDNDRKGNFPHIANEVSGVINSFVKMEETDFDVVPAEGARYKARESTTAFYQESFEKPLLTDTEQYYSALAQKMLTDLSCSEYMEQVIVLLEQEEMRAKKYLHESSVEKVITLCQKVMIKAHKDKLHAVCHDLITNEENKDLRNMYRLLKPIQAGLSVMVKEFEEYVKKKGLEAVSRLTGENVPQQFVENVLRVYNKFNDMKTAVFMDDGEFSSGLDKALQGVVNSKEPGQSVPKASERLARYTDGLLKKSTKGLSETDLEAKLDSAIVIFRYIEDKDIFQKFYSKMLANRLIASTSISMDAEELMINKLKQACGYEFTSKLSRMFTDIGLSQELSNNFDKHIADIKTVQPDVKFVPTQTMILQAGSWPLNAPQLSTNSNNQTAQDVANFHLPRILQPVIQEFEKFYTGKHNGRKLTWLFNMSQGDVRLTYLDKQYVAQMYVYQMAALLCFERRDAILVKDIGEEIGVSGDYLLKTIRTILDVTLLTCDDQNLTADSLVRLNMSMTSKRMKFRLQAPQVNKAVEKEQEAVANTVSQDRKYYMECAIVRIMKTRKVLKHNALVTEIMDQTKGRFSPDVPFIKKSIEDLIEKMYIQRTDQNDEYQYLA</sequence>
<feature type="chain" id="PRO_0000119781" description="Cullin-2">
    <location>
        <begin position="1"/>
        <end position="791"/>
    </location>
</feature>
<feature type="domain" description="Cullin neddylation" evidence="4">
    <location>
        <begin position="722"/>
        <end position="784"/>
    </location>
</feature>
<feature type="cross-link" description="Glycyl lysine isopeptide (Lys-Gly) (interchain with G-Cter in NEDD8)" evidence="1">
    <location>
        <position position="736"/>
    </location>
</feature>
<feature type="splice variant" id="VSP_060362" description="In isoform b and isoform d." evidence="12">
    <location>
        <begin position="1"/>
        <end position="17"/>
    </location>
</feature>
<feature type="splice variant" id="VSP_060363" description="In isoform d." evidence="12">
    <location>
        <begin position="547"/>
        <end position="579"/>
    </location>
</feature>
<feature type="splice variant" id="VSP_060364" description="In isoform d." evidence="12">
    <original>T</original>
    <variation>TFQ</variation>
    <location>
        <position position="718"/>
    </location>
</feature>
<feature type="sequence conflict" description="In Ref. 1; AAC47121." evidence="12" ref="1">
    <original>S</original>
    <variation>I</variation>
    <location>
        <position position="72"/>
    </location>
</feature>
<feature type="sequence conflict" description="In Ref. 1; AAC47121." evidence="12" ref="1">
    <original>KA</original>
    <variation>NG</variation>
    <location>
        <begin position="420"/>
        <end position="421"/>
    </location>
</feature>
<feature type="sequence conflict" description="In Ref. 1; AAC47121." evidence="12" ref="1">
    <original>Y</original>
    <variation>H</variation>
    <location>
        <position position="621"/>
    </location>
</feature>
<comment type="function">
    <text evidence="2 6 8 9 10 11">Core component of multiple cullin-RING-based CBC (Cul2-ElonginB-ElonginC) E3 ubiquitin-protein ligase complexes which mediate the ubiquitination and subsequent proteasomal degradation of target proteins. As a scaffold protein may contribute to catalysis through positioning of the substrate and the ubiquitin-conjugating enzyme. The functional specificity of the CBC complex depends on the variable substrate recognition component (By similarity). May function in ubiquitin-mediated degradation of CKIs to target cki-1 for degradation. CBC(zif-1) may ensure germline precursor cell asymmetry by targeting germline proteins for destruction if expressed in non-germline cells (PubMed:12894212). As part of the CBC(fem-1) complex directs ubiquitination of tra-1 (PubMed:17609115). As part of the CBC(lrr-1) complex, required for the ubiquitination and dissasembly of the CMG helicase complex from chromatin at the end of DNA replication (PubMed:28368371). Positive cell-cycle regulator that is required at two distinct points in the cell cycle; the G1-to-S-phase transition and mitosis (PubMed:10587644). Also required for proper cytoskeletal movement and mitotic chromosome condensation (PubMed:10587644).</text>
</comment>
<comment type="pathway">
    <text>Protein modification; protein ubiquitination.</text>
</comment>
<comment type="subunit">
    <text evidence="2 7 9 10 11 13">Component of multiple CBC (Cul2-ElonginB-ElonginC) E3 ubiquitin-protein ligase complexes formed of cul-2, elb-1, elc-1, rbx-1 and a variable substrate recognition component (By similarity). Component of the CBC(fem-1) E3 ubiquitin-protein ligase complex with fem-1, fem-2 and fem-3 (PubMed:17609115). The CBC(fem-1) complex interacts with tra-1 and promotes tra-1 degradation (PubMed:17609115). Probable component of the CBC(lrr-1) E3 ubiquitin-protein ligase complex incuding cul-2, elb-1, elc-1, rbx-1 and lrr-1 (PubMed:28368371). The CBC(lrr-1) complex interacts with the DNA replisome complex at the end of S phase; the interaction promotes the release of components of the CMG helicase complex (a component of the replisome) from chromatin (PubMed:28368371). Probable component of an CBC(zif-1) E3 ubiquitin-protein ligase including cul-2, elc-1, rbx-1 and zif-1 (PubMed:12894212). Part of an E3 ubiquitin-protein ligase complex including cul-2, elc-1 and zyg-11 (PubMed:17304241). Interacts with Skp1-related protein skr-10 (PubMed:11864566).</text>
</comment>
<comment type="interaction">
    <interactant intactId="EBI-1811231">
        <id>Q17390</id>
    </interactant>
    <interactant intactId="EBI-300574">
        <id>Q9BKS1</id>
        <label>elc-1</label>
    </interactant>
    <organismsDiffer>false</organismsDiffer>
    <experiments>2</experiments>
</comment>
<comment type="interaction">
    <interactant intactId="EBI-1811231">
        <id>Q17390</id>
    </interactant>
    <interactant intactId="EBI-1811352">
        <id>Q2WF59</id>
        <label>zer-1</label>
    </interactant>
    <organismsDiffer>false</organismsDiffer>
    <experiments>2</experiments>
</comment>
<comment type="interaction">
    <interactant intactId="EBI-1811231">
        <id>Q17390</id>
    </interactant>
    <interactant intactId="EBI-314647">
        <id>P21541</id>
        <label>zyg-11</label>
    </interactant>
    <organismsDiffer>false</organismsDiffer>
    <experiments>3</experiments>
</comment>
<comment type="subcellular location">
    <subcellularLocation>
        <location evidence="6">Cytoplasm</location>
    </subcellularLocation>
    <subcellularLocation>
        <location evidence="6">Nucleus</location>
    </subcellularLocation>
    <text>Nuclear in oocytes.</text>
</comment>
<comment type="alternative products">
    <event type="alternative splicing"/>
    <isoform>
        <id>Q17390-1</id>
        <name evidence="15">c</name>
        <sequence type="displayed"/>
    </isoform>
    <isoform>
        <id>Q17390-2</id>
        <name evidence="14">b</name>
        <sequence type="described" ref="VSP_060362"/>
    </isoform>
    <isoform>
        <id>Q17390-3</id>
        <name evidence="16">d</name>
        <sequence type="described" ref="VSP_060362 VSP_060363 VSP_060364"/>
    </isoform>
</comment>
<comment type="tissue specificity">
    <text evidence="6">In adults, highly expressed in meiotic cells and oocytes. In larvae, expressed in many proliferating cell types: P cells during the L1 stage; seam cells when they divide at every molt; vulval and somatic gonad cells in late L3 and L4 stages; and intestinal cells throughout larval development.</text>
</comment>
<comment type="developmental stage">
    <text evidence="6">Expressed both maternally and zygotically. Highest levels in embryos and lower levels in larvae and adults.</text>
</comment>
<comment type="PTM">
    <text evidence="2 3">Neddylated; which enhances the ubiquitination activity of CBC (Cul2-ElonginB-ElonginC) E3 ubiquitin-protein ligase complexes.</text>
</comment>
<comment type="disruption phenotype">
    <text evidence="11">RNAi-mediated knockdown prevents the release of sld-5 and psf-1 from chromatin prior to prophase in early embryos.</text>
</comment>
<comment type="similarity">
    <text evidence="5">Belongs to the cullin family.</text>
</comment>
<accession>Q17390</accession>
<accession>O46021</accession>
<accession>Q8I4A7</accession>
<accession>Q8WQ96</accession>
<accession>Q9NA22</accession>
<name>CUL2_CAEEL</name>